<reference key="1">
    <citation type="submission" date="2004-11" db="EMBL/GenBank/DDBJ databases">
        <title>Complete genome sequence of Thermus thermophilus HB8.</title>
        <authorList>
            <person name="Masui R."/>
            <person name="Kurokawa K."/>
            <person name="Nakagawa N."/>
            <person name="Tokunaga F."/>
            <person name="Koyama Y."/>
            <person name="Shibata T."/>
            <person name="Oshima T."/>
            <person name="Yokoyama S."/>
            <person name="Yasunaga T."/>
            <person name="Kuramitsu S."/>
        </authorList>
    </citation>
    <scope>NUCLEOTIDE SEQUENCE [LARGE SCALE GENOMIC DNA]</scope>
    <source>
        <strain>ATCC 27634 / DSM 579 / HB8</strain>
    </source>
</reference>
<reference key="2">
    <citation type="journal article" date="2000" name="Biol. Chem.">
        <title>Identification of the 50S ribosomal proteins from the eubacterium Thermus thermophilus.</title>
        <authorList>
            <person name="Katsani K.R."/>
            <person name="Tsiboli P."/>
            <person name="Anagnostopoulos K."/>
            <person name="Urlaub H."/>
            <person name="Choli-Papadopoulou T."/>
        </authorList>
    </citation>
    <scope>PROTEIN SEQUENCE OF 1-15</scope>
    <source>
        <strain>ATCC 27634 / DSM 579 / HB8</strain>
    </source>
</reference>
<reference key="3">
    <citation type="journal article" date="2005" name="Proteomics">
        <title>Extending ribosomal protein identifications to unsequenced bacterial strains using matrix-assisted laser desorption/ionization mass spectrometry.</title>
        <authorList>
            <person name="Suh M.-J."/>
            <person name="Hamburg D.M."/>
            <person name="Gregory S.T."/>
            <person name="Dahlberg A.E."/>
            <person name="Limbach P.A."/>
        </authorList>
    </citation>
    <scope>MASS SPECTROMETRY</scope>
    <source>
        <strain>ATCC 27634 / DSM 579 / HB8</strain>
    </source>
</reference>
<reference key="4">
    <citation type="journal article" date="2001" name="Cell">
        <title>The path of messenger RNA through the ribosome.</title>
        <authorList>
            <person name="Yusupova G.Z."/>
            <person name="Yusupov M.M."/>
            <person name="Cate J.H.D."/>
            <person name="Noller H.F."/>
        </authorList>
    </citation>
    <scope>X-RAY CRYSTALLOGRAPHY (5.0 ANGSTROMS) OF THE RIBOSOME</scope>
</reference>
<reference key="5">
    <citation type="journal article" date="2001" name="Science">
        <title>Crystal structure of the ribosome at 5.5 A resolution.</title>
        <authorList>
            <person name="Yusupov M.M."/>
            <person name="Yusupova G.Z."/>
            <person name="Baucom A."/>
            <person name="Lieberman K."/>
            <person name="Earnest T.N."/>
            <person name="Cate J.H.D."/>
            <person name="Noller H.F."/>
        </authorList>
    </citation>
    <scope>X-RAY CRYSTALLOGRAPHY (5.5 ANGSTROMS) OF THE RIBOSOME</scope>
</reference>
<reference key="6">
    <citation type="journal article" date="2008" name="Science">
        <title>Insights into translational termination from the structure of RF2 bound to the ribosome.</title>
        <authorList>
            <person name="Weixlbaumer A."/>
            <person name="Jin H."/>
            <person name="Neubauer C."/>
            <person name="Voorhees R.M."/>
            <person name="Petry S."/>
            <person name="Kelley A.C."/>
            <person name="Ramakrishnan V."/>
        </authorList>
    </citation>
    <scope>X-RAY CRYSTALLOGRAPHY (3.45 ANGSTROMS) OF 70S RIBOSOME IN COMPLEX WITH RF2</scope>
    <scope>SUBUNIT</scope>
</reference>
<reference key="7">
    <citation type="journal article" date="2010" name="Proc. Natl. Acad. Sci. U.S.A.">
        <title>Structure of the 70S ribosome bound to release factor 2 and a substrate analog provides insights into catalysis of peptide release.</title>
        <authorList>
            <person name="Jin H."/>
            <person name="Kelley A.C."/>
            <person name="Loakes D."/>
            <person name="Ramakrishnan V."/>
        </authorList>
    </citation>
    <scope>X-RAY CRYSTALLOGRAPHY (3.10 ANGSTROMS) OF 70S RIBOSOME IN COMPLEX WITH RF2</scope>
    <scope>SUBUNIT</scope>
</reference>
<gene>
    <name type="primary">rplO</name>
    <name type="ordered locus">TTHA1673</name>
</gene>
<comment type="function">
    <text evidence="1">Binds to the 23S rRNA.</text>
</comment>
<comment type="subunit">
    <text>Part of the 50S ribosomal subunit.</text>
</comment>
<comment type="mass spectrometry" mass="16284.0" method="MALDI" evidence="3"/>
<comment type="similarity">
    <text evidence="4">Belongs to the universal ribosomal protein uL15 family.</text>
</comment>
<protein>
    <recommendedName>
        <fullName evidence="4">Large ribosomal subunit protein uL15</fullName>
    </recommendedName>
    <alternativeName>
        <fullName>50S ribosomal protein L15</fullName>
    </alternativeName>
</protein>
<proteinExistence type="evidence at protein level"/>
<organism>
    <name type="scientific">Thermus thermophilus (strain ATCC 27634 / DSM 579 / HB8)</name>
    <dbReference type="NCBI Taxonomy" id="300852"/>
    <lineage>
        <taxon>Bacteria</taxon>
        <taxon>Thermotogati</taxon>
        <taxon>Deinococcota</taxon>
        <taxon>Deinococci</taxon>
        <taxon>Thermales</taxon>
        <taxon>Thermaceae</taxon>
        <taxon>Thermus</taxon>
    </lineage>
</organism>
<accession>Q5SHQ7</accession>
<keyword id="KW-0002">3D-structure</keyword>
<keyword id="KW-0903">Direct protein sequencing</keyword>
<keyword id="KW-1185">Reference proteome</keyword>
<keyword id="KW-0687">Ribonucleoprotein</keyword>
<keyword id="KW-0689">Ribosomal protein</keyword>
<keyword id="KW-0694">RNA-binding</keyword>
<keyword id="KW-0699">rRNA-binding</keyword>
<dbReference type="EMBL" id="AP008226">
    <property type="protein sequence ID" value="BAD71496.1"/>
    <property type="molecule type" value="Genomic_DNA"/>
</dbReference>
<dbReference type="RefSeq" id="WP_011173703.1">
    <property type="nucleotide sequence ID" value="NC_006461.1"/>
</dbReference>
<dbReference type="RefSeq" id="YP_144939.1">
    <property type="nucleotide sequence ID" value="NC_006461.1"/>
</dbReference>
<dbReference type="PDB" id="1VVJ">
    <property type="method" value="X-ray"/>
    <property type="resolution" value="3.44 A"/>
    <property type="chains" value="RP/YP=1-150"/>
</dbReference>
<dbReference type="PDB" id="1VY4">
    <property type="method" value="X-ray"/>
    <property type="resolution" value="2.60 A"/>
    <property type="chains" value="BP/DP=1-150"/>
</dbReference>
<dbReference type="PDB" id="1VY5">
    <property type="method" value="X-ray"/>
    <property type="resolution" value="2.55 A"/>
    <property type="chains" value="BP/DP=1-150"/>
</dbReference>
<dbReference type="PDB" id="1VY6">
    <property type="method" value="X-ray"/>
    <property type="resolution" value="2.90 A"/>
    <property type="chains" value="BP/DP=1-150"/>
</dbReference>
<dbReference type="PDB" id="1VY7">
    <property type="method" value="X-ray"/>
    <property type="resolution" value="2.80 A"/>
    <property type="chains" value="BP/DP=1-150"/>
</dbReference>
<dbReference type="PDB" id="4L47">
    <property type="method" value="X-ray"/>
    <property type="resolution" value="3.22 A"/>
    <property type="chains" value="RP/YP=1-150"/>
</dbReference>
<dbReference type="PDB" id="4L71">
    <property type="method" value="X-ray"/>
    <property type="resolution" value="3.90 A"/>
    <property type="chains" value="RP/YP=1-150"/>
</dbReference>
<dbReference type="PDB" id="4LEL">
    <property type="method" value="X-ray"/>
    <property type="resolution" value="3.90 A"/>
    <property type="chains" value="RP/YP=1-150"/>
</dbReference>
<dbReference type="PDB" id="4LFZ">
    <property type="method" value="X-ray"/>
    <property type="resolution" value="3.92 A"/>
    <property type="chains" value="RP/YP=1-150"/>
</dbReference>
<dbReference type="PDB" id="4LNT">
    <property type="method" value="X-ray"/>
    <property type="resolution" value="2.94 A"/>
    <property type="chains" value="RP/YP=1-150"/>
</dbReference>
<dbReference type="PDB" id="4LSK">
    <property type="method" value="X-ray"/>
    <property type="resolution" value="3.48 A"/>
    <property type="chains" value="RP/YP=1-150"/>
</dbReference>
<dbReference type="PDB" id="4LT8">
    <property type="method" value="X-ray"/>
    <property type="resolution" value="3.14 A"/>
    <property type="chains" value="RP/YP=1-150"/>
</dbReference>
<dbReference type="PDB" id="4P6F">
    <property type="method" value="X-ray"/>
    <property type="resolution" value="3.60 A"/>
    <property type="chains" value="RP/YP=1-150"/>
</dbReference>
<dbReference type="PDB" id="4P70">
    <property type="method" value="X-ray"/>
    <property type="resolution" value="3.68 A"/>
    <property type="chains" value="RP/YP=1-150"/>
</dbReference>
<dbReference type="PDB" id="4TUA">
    <property type="method" value="X-ray"/>
    <property type="resolution" value="3.60 A"/>
    <property type="chains" value="RP/YP=1-150"/>
</dbReference>
<dbReference type="PDB" id="4TUB">
    <property type="method" value="X-ray"/>
    <property type="resolution" value="3.60 A"/>
    <property type="chains" value="RP/YP=1-150"/>
</dbReference>
<dbReference type="PDB" id="4TUC">
    <property type="method" value="X-ray"/>
    <property type="resolution" value="3.60 A"/>
    <property type="chains" value="RP/YP=1-150"/>
</dbReference>
<dbReference type="PDB" id="4TUD">
    <property type="method" value="X-ray"/>
    <property type="resolution" value="3.60 A"/>
    <property type="chains" value="RP/YP=1-150"/>
</dbReference>
<dbReference type="PDB" id="4TUE">
    <property type="method" value="X-ray"/>
    <property type="resolution" value="3.50 A"/>
    <property type="chains" value="RP/YP=1-150"/>
</dbReference>
<dbReference type="PDB" id="4V42">
    <property type="method" value="X-ray"/>
    <property type="resolution" value="5.50 A"/>
    <property type="chains" value="BO=1-150"/>
</dbReference>
<dbReference type="PDB" id="4V4P">
    <property type="method" value="X-ray"/>
    <property type="resolution" value="5.50 A"/>
    <property type="chains" value="O=1-150"/>
</dbReference>
<dbReference type="PDB" id="4V4X">
    <property type="method" value="X-ray"/>
    <property type="resolution" value="5.00 A"/>
    <property type="chains" value="O=1-150"/>
</dbReference>
<dbReference type="PDB" id="4V4Y">
    <property type="method" value="X-ray"/>
    <property type="resolution" value="5.50 A"/>
    <property type="chains" value="O=1-150"/>
</dbReference>
<dbReference type="PDB" id="4V4Z">
    <property type="method" value="X-ray"/>
    <property type="resolution" value="4.51 A"/>
    <property type="chains" value="O=1-150"/>
</dbReference>
<dbReference type="PDB" id="4V51">
    <property type="method" value="X-ray"/>
    <property type="resolution" value="2.80 A"/>
    <property type="chains" value="BP/DP=1-150"/>
</dbReference>
<dbReference type="PDB" id="4V5A">
    <property type="method" value="X-ray"/>
    <property type="resolution" value="3.50 A"/>
    <property type="chains" value="BP/DP=1-150"/>
</dbReference>
<dbReference type="PDB" id="4V5C">
    <property type="method" value="X-ray"/>
    <property type="resolution" value="3.30 A"/>
    <property type="chains" value="BP/DP=1-150"/>
</dbReference>
<dbReference type="PDB" id="4V5D">
    <property type="method" value="X-ray"/>
    <property type="resolution" value="3.50 A"/>
    <property type="chains" value="BP/DP=1-150"/>
</dbReference>
<dbReference type="PDB" id="4V5E">
    <property type="method" value="X-ray"/>
    <property type="resolution" value="3.45 A"/>
    <property type="chains" value="BP/DP=1-150"/>
</dbReference>
<dbReference type="PDB" id="4V5F">
    <property type="method" value="X-ray"/>
    <property type="resolution" value="3.60 A"/>
    <property type="chains" value="BP/DP=1-150"/>
</dbReference>
<dbReference type="PDB" id="4V5G">
    <property type="method" value="X-ray"/>
    <property type="resolution" value="3.60 A"/>
    <property type="chains" value="BP/DP=1-150"/>
</dbReference>
<dbReference type="PDB" id="4V5J">
    <property type="method" value="X-ray"/>
    <property type="resolution" value="3.10 A"/>
    <property type="chains" value="BP/DP=1-150"/>
</dbReference>
<dbReference type="PDB" id="4V5K">
    <property type="method" value="X-ray"/>
    <property type="resolution" value="3.20 A"/>
    <property type="chains" value="BP/DP=1-150"/>
</dbReference>
<dbReference type="PDB" id="4V5L">
    <property type="method" value="X-ray"/>
    <property type="resolution" value="3.10 A"/>
    <property type="chains" value="BP=1-150"/>
</dbReference>
<dbReference type="PDB" id="4V5M">
    <property type="method" value="EM"/>
    <property type="resolution" value="7.80 A"/>
    <property type="chains" value="BP=1-150"/>
</dbReference>
<dbReference type="PDB" id="4V5N">
    <property type="method" value="EM"/>
    <property type="resolution" value="7.60 A"/>
    <property type="chains" value="BP=1-150"/>
</dbReference>
<dbReference type="PDB" id="4V5P">
    <property type="method" value="X-ray"/>
    <property type="resolution" value="3.10 A"/>
    <property type="chains" value="BP/DP=1-150"/>
</dbReference>
<dbReference type="PDB" id="4V5Q">
    <property type="method" value="X-ray"/>
    <property type="resolution" value="3.10 A"/>
    <property type="chains" value="BP/DP=1-150"/>
</dbReference>
<dbReference type="PDB" id="4V5R">
    <property type="method" value="X-ray"/>
    <property type="resolution" value="3.10 A"/>
    <property type="chains" value="BP/DP=1-150"/>
</dbReference>
<dbReference type="PDB" id="4V5S">
    <property type="method" value="X-ray"/>
    <property type="resolution" value="3.10 A"/>
    <property type="chains" value="BP/DP=1-150"/>
</dbReference>
<dbReference type="PDB" id="4V68">
    <property type="method" value="EM"/>
    <property type="resolution" value="6.40 A"/>
    <property type="chains" value="BP=5-150"/>
</dbReference>
<dbReference type="PDB" id="4V6A">
    <property type="method" value="X-ray"/>
    <property type="resolution" value="3.10 A"/>
    <property type="chains" value="BP/DP=1-150"/>
</dbReference>
<dbReference type="PDB" id="4V6F">
    <property type="method" value="X-ray"/>
    <property type="resolution" value="3.10 A"/>
    <property type="chains" value="AO/DO=1-150"/>
</dbReference>
<dbReference type="PDB" id="4V6G">
    <property type="method" value="X-ray"/>
    <property type="resolution" value="3.50 A"/>
    <property type="chains" value="BO/DO=1-150"/>
</dbReference>
<dbReference type="PDB" id="4V7J">
    <property type="method" value="X-ray"/>
    <property type="resolution" value="3.30 A"/>
    <property type="chains" value="AP/BP=1-150"/>
</dbReference>
<dbReference type="PDB" id="4V7K">
    <property type="method" value="X-ray"/>
    <property type="resolution" value="3.60 A"/>
    <property type="chains" value="AP/BP=1-150"/>
</dbReference>
<dbReference type="PDB" id="4V7L">
    <property type="method" value="X-ray"/>
    <property type="resolution" value="3.00 A"/>
    <property type="chains" value="BP/DP=1-150"/>
</dbReference>
<dbReference type="PDB" id="4V7M">
    <property type="method" value="X-ray"/>
    <property type="resolution" value="3.45 A"/>
    <property type="chains" value="BP/DP=1-150"/>
</dbReference>
<dbReference type="PDB" id="4V7W">
    <property type="method" value="X-ray"/>
    <property type="resolution" value="3.00 A"/>
    <property type="chains" value="BP/DP=1-150"/>
</dbReference>
<dbReference type="PDB" id="4V7X">
    <property type="method" value="X-ray"/>
    <property type="resolution" value="3.00 A"/>
    <property type="chains" value="BP/DP=1-150"/>
</dbReference>
<dbReference type="PDB" id="4V7Y">
    <property type="method" value="X-ray"/>
    <property type="resolution" value="3.00 A"/>
    <property type="chains" value="BP/DP=1-150"/>
</dbReference>
<dbReference type="PDB" id="4V7Z">
    <property type="method" value="X-ray"/>
    <property type="resolution" value="3.10 A"/>
    <property type="chains" value="BP/DP=1-150"/>
</dbReference>
<dbReference type="PDB" id="4V87">
    <property type="method" value="X-ray"/>
    <property type="resolution" value="3.10 A"/>
    <property type="chains" value="AO/DO=1-150"/>
</dbReference>
<dbReference type="PDB" id="4V8A">
    <property type="method" value="X-ray"/>
    <property type="resolution" value="3.20 A"/>
    <property type="chains" value="AP/BP=1-150"/>
</dbReference>
<dbReference type="PDB" id="4V8B">
    <property type="method" value="X-ray"/>
    <property type="resolution" value="3.00 A"/>
    <property type="chains" value="BO/DO=1-150"/>
</dbReference>
<dbReference type="PDB" id="4V8C">
    <property type="method" value="X-ray"/>
    <property type="resolution" value="3.30 A"/>
    <property type="chains" value="AO/BO=1-150"/>
</dbReference>
<dbReference type="PDB" id="4V8D">
    <property type="method" value="X-ray"/>
    <property type="resolution" value="3.00 A"/>
    <property type="chains" value="BO/DO=1-150"/>
</dbReference>
<dbReference type="PDB" id="4V8E">
    <property type="method" value="X-ray"/>
    <property type="resolution" value="3.30 A"/>
    <property type="chains" value="AO/CO=1-150"/>
</dbReference>
<dbReference type="PDB" id="4V8F">
    <property type="method" value="X-ray"/>
    <property type="resolution" value="3.30 A"/>
    <property type="chains" value="AO/DO=1-150"/>
</dbReference>
<dbReference type="PDB" id="4V8G">
    <property type="method" value="X-ray"/>
    <property type="resolution" value="3.00 A"/>
    <property type="chains" value="BP/DP=1-150"/>
</dbReference>
<dbReference type="PDB" id="4V8H">
    <property type="method" value="X-ray"/>
    <property type="resolution" value="3.10 A"/>
    <property type="chains" value="BP/DP=1-150"/>
</dbReference>
<dbReference type="PDB" id="4V8I">
    <property type="method" value="X-ray"/>
    <property type="resolution" value="2.70 A"/>
    <property type="chains" value="BP/DP=1-150"/>
</dbReference>
<dbReference type="PDB" id="4V8J">
    <property type="method" value="X-ray"/>
    <property type="resolution" value="3.90 A"/>
    <property type="chains" value="BP/DP=1-150"/>
</dbReference>
<dbReference type="PDB" id="4V8N">
    <property type="method" value="X-ray"/>
    <property type="resolution" value="3.10 A"/>
    <property type="chains" value="BP/DP=1-150"/>
</dbReference>
<dbReference type="PDB" id="4V8O">
    <property type="method" value="X-ray"/>
    <property type="resolution" value="3.80 A"/>
    <property type="chains" value="BP=1-150"/>
</dbReference>
<dbReference type="PDB" id="4V8Q">
    <property type="method" value="X-ray"/>
    <property type="resolution" value="3.10 A"/>
    <property type="chains" value="AP=1-150"/>
</dbReference>
<dbReference type="PDB" id="4V8U">
    <property type="method" value="X-ray"/>
    <property type="resolution" value="3.70 A"/>
    <property type="chains" value="BP/DP=1-150"/>
</dbReference>
<dbReference type="PDB" id="4V8X">
    <property type="method" value="X-ray"/>
    <property type="resolution" value="3.35 A"/>
    <property type="chains" value="BP/DP=1-150"/>
</dbReference>
<dbReference type="PDB" id="4V90">
    <property type="method" value="X-ray"/>
    <property type="resolution" value="2.95 A"/>
    <property type="chains" value="BP=2-150"/>
</dbReference>
<dbReference type="PDB" id="4V95">
    <property type="method" value="X-ray"/>
    <property type="resolution" value="3.20 A"/>
    <property type="chains" value="BP/DP=1-150"/>
</dbReference>
<dbReference type="PDB" id="4V97">
    <property type="method" value="X-ray"/>
    <property type="resolution" value="3.52 A"/>
    <property type="chains" value="BP/DP=1-150"/>
</dbReference>
<dbReference type="PDB" id="4V9A">
    <property type="method" value="X-ray"/>
    <property type="resolution" value="3.30 A"/>
    <property type="chains" value="BO/DO=1-150"/>
</dbReference>
<dbReference type="PDB" id="4V9B">
    <property type="method" value="X-ray"/>
    <property type="resolution" value="3.10 A"/>
    <property type="chains" value="BO/DO=1-150"/>
</dbReference>
<dbReference type="PDB" id="4V9H">
    <property type="method" value="X-ray"/>
    <property type="resolution" value="2.86 A"/>
    <property type="chains" value="BP=1-150"/>
</dbReference>
<dbReference type="PDB" id="4V9I">
    <property type="method" value="X-ray"/>
    <property type="resolution" value="3.30 A"/>
    <property type="chains" value="BP/DP=5-150"/>
</dbReference>
<dbReference type="PDB" id="4V9R">
    <property type="method" value="X-ray"/>
    <property type="resolution" value="3.00 A"/>
    <property type="chains" value="BP/DP=1-150"/>
</dbReference>
<dbReference type="PDB" id="4V9S">
    <property type="method" value="X-ray"/>
    <property type="resolution" value="3.10 A"/>
    <property type="chains" value="BP/DP=1-150"/>
</dbReference>
<dbReference type="PDB" id="4W2E">
    <property type="method" value="X-ray"/>
    <property type="resolution" value="2.90 A"/>
    <property type="chains" value="P=1-150"/>
</dbReference>
<dbReference type="PDB" id="4W2F">
    <property type="method" value="X-ray"/>
    <property type="resolution" value="2.40 A"/>
    <property type="chains" value="BP/DP=1-150"/>
</dbReference>
<dbReference type="PDB" id="4W2G">
    <property type="method" value="X-ray"/>
    <property type="resolution" value="2.55 A"/>
    <property type="chains" value="BP/DP=1-150"/>
</dbReference>
<dbReference type="PDB" id="4W2H">
    <property type="method" value="X-ray"/>
    <property type="resolution" value="2.70 A"/>
    <property type="chains" value="BP/DP=1-150"/>
</dbReference>
<dbReference type="PDB" id="4W2I">
    <property type="method" value="X-ray"/>
    <property type="resolution" value="2.70 A"/>
    <property type="chains" value="BP/DP=1-150"/>
</dbReference>
<dbReference type="PDB" id="4W4G">
    <property type="method" value="X-ray"/>
    <property type="resolution" value="3.30 A"/>
    <property type="chains" value="RP/YP=1-150"/>
</dbReference>
<dbReference type="PDB" id="4WPO">
    <property type="method" value="X-ray"/>
    <property type="resolution" value="2.80 A"/>
    <property type="chains" value="AP/CP=1-150"/>
</dbReference>
<dbReference type="PDB" id="4WQ1">
    <property type="method" value="X-ray"/>
    <property type="resolution" value="3.10 A"/>
    <property type="chains" value="35/78=1-150"/>
</dbReference>
<dbReference type="PDB" id="4WQF">
    <property type="method" value="X-ray"/>
    <property type="resolution" value="2.80 A"/>
    <property type="chains" value="AP/CP=1-150"/>
</dbReference>
<dbReference type="PDB" id="4WQR">
    <property type="method" value="X-ray"/>
    <property type="resolution" value="3.15 A"/>
    <property type="chains" value="35/78=1-150"/>
</dbReference>
<dbReference type="PDB" id="4WQU">
    <property type="method" value="X-ray"/>
    <property type="resolution" value="2.80 A"/>
    <property type="chains" value="AP/CP=1-150"/>
</dbReference>
<dbReference type="PDB" id="4WQY">
    <property type="method" value="X-ray"/>
    <property type="resolution" value="2.80 A"/>
    <property type="chains" value="AP/CP=1-150"/>
</dbReference>
<dbReference type="PDB" id="4WR6">
    <property type="method" value="X-ray"/>
    <property type="resolution" value="3.05 A"/>
    <property type="chains" value="35/78=1-150"/>
</dbReference>
<dbReference type="PDB" id="4WRA">
    <property type="method" value="X-ray"/>
    <property type="resolution" value="3.05 A"/>
    <property type="chains" value="35/78=1-150"/>
</dbReference>
<dbReference type="PDB" id="4WRO">
    <property type="method" value="X-ray"/>
    <property type="resolution" value="3.05 A"/>
    <property type="chains" value="78=1-150"/>
</dbReference>
<dbReference type="PDB" id="4WSD">
    <property type="method" value="X-ray"/>
    <property type="resolution" value="2.95 A"/>
    <property type="chains" value="35/78=1-150"/>
</dbReference>
<dbReference type="PDB" id="4WSM">
    <property type="method" value="X-ray"/>
    <property type="resolution" value="3.30 A"/>
    <property type="chains" value="35/78=1-150"/>
</dbReference>
<dbReference type="PDB" id="4WT1">
    <property type="method" value="X-ray"/>
    <property type="resolution" value="3.05 A"/>
    <property type="chains" value="35/78=1-150"/>
</dbReference>
<dbReference type="PDB" id="4WT8">
    <property type="method" value="X-ray"/>
    <property type="resolution" value="3.40 A"/>
    <property type="chains" value="CO/DO=5-150"/>
</dbReference>
<dbReference type="PDB" id="4WU1">
    <property type="method" value="X-ray"/>
    <property type="resolution" value="3.20 A"/>
    <property type="chains" value="35/78=1-150"/>
</dbReference>
<dbReference type="PDB" id="4WZD">
    <property type="method" value="X-ray"/>
    <property type="resolution" value="3.10 A"/>
    <property type="chains" value="35/78=1-150"/>
</dbReference>
<dbReference type="PDB" id="4WZO">
    <property type="method" value="X-ray"/>
    <property type="resolution" value="3.30 A"/>
    <property type="chains" value="35/78=1-150"/>
</dbReference>
<dbReference type="PDB" id="4Y4O">
    <property type="method" value="X-ray"/>
    <property type="resolution" value="2.30 A"/>
    <property type="chains" value="1P/2P=1-150"/>
</dbReference>
<dbReference type="PDB" id="4Y4P">
    <property type="method" value="X-ray"/>
    <property type="resolution" value="2.50 A"/>
    <property type="chains" value="1P/2P=1-150"/>
</dbReference>
<dbReference type="PDB" id="4YPB">
    <property type="method" value="X-ray"/>
    <property type="resolution" value="3.40 A"/>
    <property type="chains" value="RP/YP=1-150"/>
</dbReference>
<dbReference type="PDB" id="4YZV">
    <property type="method" value="X-ray"/>
    <property type="resolution" value="3.10 A"/>
    <property type="chains" value="RP/YP=1-150"/>
</dbReference>
<dbReference type="PDB" id="4Z3S">
    <property type="method" value="X-ray"/>
    <property type="resolution" value="2.65 A"/>
    <property type="chains" value="1P/2P=1-150"/>
</dbReference>
<dbReference type="PDB" id="4Z8C">
    <property type="method" value="X-ray"/>
    <property type="resolution" value="2.90 A"/>
    <property type="chains" value="1P/2P=1-150"/>
</dbReference>
<dbReference type="PDB" id="4ZER">
    <property type="method" value="X-ray"/>
    <property type="resolution" value="3.10 A"/>
    <property type="chains" value="1P/2P=1-149"/>
</dbReference>
<dbReference type="PDB" id="4ZSN">
    <property type="method" value="X-ray"/>
    <property type="resolution" value="3.60 A"/>
    <property type="chains" value="RP/YP=1-150"/>
</dbReference>
<dbReference type="PDB" id="5A9Z">
    <property type="method" value="EM"/>
    <property type="resolution" value="4.70 A"/>
    <property type="chains" value="AM=6-150"/>
</dbReference>
<dbReference type="PDB" id="5AA0">
    <property type="method" value="EM"/>
    <property type="resolution" value="5.00 A"/>
    <property type="chains" value="AM=6-150"/>
</dbReference>
<dbReference type="PDB" id="5CZP">
    <property type="method" value="X-ray"/>
    <property type="resolution" value="3.30 A"/>
    <property type="chains" value="RP/YP=1-150"/>
</dbReference>
<dbReference type="PDB" id="5D8B">
    <property type="method" value="X-ray"/>
    <property type="resolution" value="3.63 A"/>
    <property type="chains" value="FB/J=1-150"/>
</dbReference>
<dbReference type="PDB" id="5DFE">
    <property type="method" value="X-ray"/>
    <property type="resolution" value="3.10 A"/>
    <property type="chains" value="RP/YP=1-150"/>
</dbReference>
<dbReference type="PDB" id="5DOX">
    <property type="method" value="X-ray"/>
    <property type="resolution" value="3.10 A"/>
    <property type="chains" value="1P/2P=1-150"/>
</dbReference>
<dbReference type="PDB" id="5DOY">
    <property type="method" value="X-ray"/>
    <property type="resolution" value="2.60 A"/>
    <property type="chains" value="1P/2P=1-150"/>
</dbReference>
<dbReference type="PDB" id="5E7K">
    <property type="method" value="X-ray"/>
    <property type="resolution" value="3.20 A"/>
    <property type="chains" value="35/78=1-150"/>
</dbReference>
<dbReference type="PDB" id="5E81">
    <property type="method" value="X-ray"/>
    <property type="resolution" value="2.95 A"/>
    <property type="chains" value="35/78=1-150"/>
</dbReference>
<dbReference type="PDB" id="5EL4">
    <property type="method" value="X-ray"/>
    <property type="resolution" value="3.15 A"/>
    <property type="chains" value="35/78=1-150"/>
</dbReference>
<dbReference type="PDB" id="5EL5">
    <property type="method" value="X-ray"/>
    <property type="resolution" value="3.15 A"/>
    <property type="chains" value="35/78=1-150"/>
</dbReference>
<dbReference type="PDB" id="5EL6">
    <property type="method" value="X-ray"/>
    <property type="resolution" value="3.10 A"/>
    <property type="chains" value="35/78=1-150"/>
</dbReference>
<dbReference type="PDB" id="5EL7">
    <property type="method" value="X-ray"/>
    <property type="resolution" value="3.15 A"/>
    <property type="chains" value="35/78=1-150"/>
</dbReference>
<dbReference type="PDB" id="5F8K">
    <property type="method" value="X-ray"/>
    <property type="resolution" value="2.80 A"/>
    <property type="chains" value="1P/2P=1-149"/>
</dbReference>
<dbReference type="PDB" id="5FDU">
    <property type="method" value="X-ray"/>
    <property type="resolution" value="2.90 A"/>
    <property type="chains" value="1P/2P=1-149"/>
</dbReference>
<dbReference type="PDB" id="5FDV">
    <property type="method" value="X-ray"/>
    <property type="resolution" value="2.80 A"/>
    <property type="chains" value="1P/2P=1-149"/>
</dbReference>
<dbReference type="PDB" id="5HAU">
    <property type="method" value="X-ray"/>
    <property type="resolution" value="3.00 A"/>
    <property type="chains" value="1N/2N=1-150"/>
</dbReference>
<dbReference type="PDB" id="5HCP">
    <property type="method" value="X-ray"/>
    <property type="resolution" value="2.89 A"/>
    <property type="chains" value="1P/2P=1-150"/>
</dbReference>
<dbReference type="PDB" id="5HCQ">
    <property type="method" value="X-ray"/>
    <property type="resolution" value="2.80 A"/>
    <property type="chains" value="1P/2P=1-150"/>
</dbReference>
<dbReference type="PDB" id="5HCR">
    <property type="method" value="X-ray"/>
    <property type="resolution" value="2.80 A"/>
    <property type="chains" value="1P/2P=1-150"/>
</dbReference>
<dbReference type="PDB" id="5HD1">
    <property type="method" value="X-ray"/>
    <property type="resolution" value="2.70 A"/>
    <property type="chains" value="1P/2P=1-150"/>
</dbReference>
<dbReference type="PDB" id="5IB7">
    <property type="method" value="X-ray"/>
    <property type="resolution" value="2.99 A"/>
    <property type="chains" value="35/78=1-150"/>
</dbReference>
<dbReference type="PDB" id="5IB8">
    <property type="method" value="X-ray"/>
    <property type="resolution" value="3.13 A"/>
    <property type="chains" value="35/78=1-150"/>
</dbReference>
<dbReference type="PDB" id="5IBB">
    <property type="method" value="X-ray"/>
    <property type="resolution" value="2.96 A"/>
    <property type="chains" value="35/78=1-150"/>
</dbReference>
<dbReference type="PDB" id="5IMQ">
    <property type="method" value="EM"/>
    <property type="resolution" value="3.80 A"/>
    <property type="chains" value="h=1-150"/>
</dbReference>
<dbReference type="PDB" id="5IMR">
    <property type="method" value="EM"/>
    <property type="chains" value="h=1-150"/>
</dbReference>
<dbReference type="PDB" id="5J30">
    <property type="method" value="X-ray"/>
    <property type="resolution" value="3.20 A"/>
    <property type="chains" value="RP/YP=1-150"/>
</dbReference>
<dbReference type="PDB" id="5J3C">
    <property type="method" value="X-ray"/>
    <property type="resolution" value="3.04 A"/>
    <property type="chains" value="RP/YP=1-150"/>
</dbReference>
<dbReference type="PDB" id="5J4B">
    <property type="method" value="X-ray"/>
    <property type="resolution" value="2.60 A"/>
    <property type="chains" value="1P/2P=1-150"/>
</dbReference>
<dbReference type="PDB" id="5J4C">
    <property type="method" value="X-ray"/>
    <property type="resolution" value="2.80 A"/>
    <property type="chains" value="1P/2P=1-150"/>
</dbReference>
<dbReference type="PDB" id="5J8B">
    <property type="method" value="X-ray"/>
    <property type="resolution" value="2.60 A"/>
    <property type="chains" value="P=1-150"/>
</dbReference>
<dbReference type="PDB" id="5NDJ">
    <property type="method" value="X-ray"/>
    <property type="resolution" value="3.15 A"/>
    <property type="chains" value="35/78=1-150"/>
</dbReference>
<dbReference type="PDB" id="5NDK">
    <property type="method" value="X-ray"/>
    <property type="resolution" value="2.95 A"/>
    <property type="chains" value="35/78=1-150"/>
</dbReference>
<dbReference type="PDB" id="5OT7">
    <property type="method" value="EM"/>
    <property type="resolution" value="3.80 A"/>
    <property type="chains" value="q=1-150"/>
</dbReference>
<dbReference type="PDB" id="5UQ7">
    <property type="method" value="EM"/>
    <property type="resolution" value="3.50 A"/>
    <property type="chains" value="P=1-149"/>
</dbReference>
<dbReference type="PDB" id="5UQ8">
    <property type="method" value="EM"/>
    <property type="resolution" value="3.20 A"/>
    <property type="chains" value="P=1-149"/>
</dbReference>
<dbReference type="PDB" id="5VP2">
    <property type="method" value="X-ray"/>
    <property type="resolution" value="2.80 A"/>
    <property type="chains" value="1P/2P=1-150"/>
</dbReference>
<dbReference type="PDB" id="5VPO">
    <property type="method" value="X-ray"/>
    <property type="resolution" value="3.34 A"/>
    <property type="chains" value="RP/YP=1-150"/>
</dbReference>
<dbReference type="PDB" id="5VPP">
    <property type="method" value="X-ray"/>
    <property type="resolution" value="3.90 A"/>
    <property type="chains" value="RP/YP=1-150"/>
</dbReference>
<dbReference type="PDB" id="5W4K">
    <property type="method" value="X-ray"/>
    <property type="resolution" value="2.70 A"/>
    <property type="chains" value="1P/2P=1-150"/>
</dbReference>
<dbReference type="PDB" id="5WIS">
    <property type="method" value="X-ray"/>
    <property type="resolution" value="2.70 A"/>
    <property type="chains" value="1P/2P=1-150"/>
</dbReference>
<dbReference type="PDB" id="5WIT">
    <property type="method" value="X-ray"/>
    <property type="resolution" value="2.60 A"/>
    <property type="chains" value="1P/2P=1-150"/>
</dbReference>
<dbReference type="PDB" id="5ZLU">
    <property type="method" value="EM"/>
    <property type="resolution" value="3.60 A"/>
    <property type="chains" value="i=1-150"/>
</dbReference>
<dbReference type="PDB" id="6BUW">
    <property type="method" value="X-ray"/>
    <property type="resolution" value="3.50 A"/>
    <property type="chains" value="RP/YP=1-150"/>
</dbReference>
<dbReference type="PDB" id="6BZ6">
    <property type="method" value="X-ray"/>
    <property type="resolution" value="3.18 A"/>
    <property type="chains" value="RP/YP=1-150"/>
</dbReference>
<dbReference type="PDB" id="6BZ7">
    <property type="method" value="X-ray"/>
    <property type="resolution" value="3.68 A"/>
    <property type="chains" value="RP/YP=1-150"/>
</dbReference>
<dbReference type="PDB" id="6BZ8">
    <property type="method" value="X-ray"/>
    <property type="resolution" value="3.74 A"/>
    <property type="chains" value="RP/YP=1-150"/>
</dbReference>
<dbReference type="PDB" id="6C5L">
    <property type="method" value="X-ray"/>
    <property type="resolution" value="3.20 A"/>
    <property type="chains" value="BP/DP=1-150"/>
</dbReference>
<dbReference type="PDB" id="6CAE">
    <property type="method" value="X-ray"/>
    <property type="resolution" value="2.60 A"/>
    <property type="chains" value="1P/2P=1-150"/>
</dbReference>
<dbReference type="PDB" id="6CFJ">
    <property type="method" value="X-ray"/>
    <property type="resolution" value="2.80 A"/>
    <property type="chains" value="1P/2P=1-150"/>
</dbReference>
<dbReference type="PDB" id="6CFK">
    <property type="method" value="X-ray"/>
    <property type="resolution" value="2.70 A"/>
    <property type="chains" value="1P/2P=1-150"/>
</dbReference>
<dbReference type="PDB" id="6CFL">
    <property type="method" value="X-ray"/>
    <property type="resolution" value="2.60 A"/>
    <property type="chains" value="1P/2P=1-150"/>
</dbReference>
<dbReference type="PDB" id="6CZR">
    <property type="method" value="X-ray"/>
    <property type="resolution" value="3.14 A"/>
    <property type="chains" value="1P/2P=1-149"/>
</dbReference>
<dbReference type="PDB" id="6FKR">
    <property type="method" value="X-ray"/>
    <property type="resolution" value="3.20 A"/>
    <property type="chains" value="1P/2P=1-149"/>
</dbReference>
<dbReference type="PDB" id="6GSJ">
    <property type="method" value="X-ray"/>
    <property type="resolution" value="2.96 A"/>
    <property type="chains" value="35/78=1-150"/>
</dbReference>
<dbReference type="PDB" id="6GSK">
    <property type="method" value="X-ray"/>
    <property type="resolution" value="3.36 A"/>
    <property type="chains" value="35/78=1-150"/>
</dbReference>
<dbReference type="PDB" id="6GSL">
    <property type="method" value="X-ray"/>
    <property type="resolution" value="3.16 A"/>
    <property type="chains" value="35/78=1-150"/>
</dbReference>
<dbReference type="PDB" id="6GZQ">
    <property type="method" value="EM"/>
    <property type="resolution" value="3.28 A"/>
    <property type="chains" value="K1=1-150"/>
</dbReference>
<dbReference type="PDB" id="6GZX">
    <property type="method" value="EM"/>
    <property type="resolution" value="4.57 A"/>
    <property type="chains" value="K1/K2=1-150"/>
</dbReference>
<dbReference type="PDB" id="6GZZ">
    <property type="method" value="EM"/>
    <property type="resolution" value="4.13 A"/>
    <property type="chains" value="K1/K2=1-150"/>
</dbReference>
<dbReference type="PDB" id="6N9E">
    <property type="method" value="X-ray"/>
    <property type="resolution" value="3.70 A"/>
    <property type="chains" value="1P/2P=1-150"/>
</dbReference>
<dbReference type="PDB" id="6N9F">
    <property type="method" value="X-ray"/>
    <property type="resolution" value="3.70 A"/>
    <property type="chains" value="1P/2P=1-150"/>
</dbReference>
<dbReference type="PDB" id="6ND5">
    <property type="method" value="X-ray"/>
    <property type="resolution" value="2.60 A"/>
    <property type="chains" value="1P/2P=1-150"/>
</dbReference>
<dbReference type="PDB" id="6ND6">
    <property type="method" value="X-ray"/>
    <property type="resolution" value="2.85 A"/>
    <property type="chains" value="1P/2P=1-150"/>
</dbReference>
<dbReference type="PDB" id="6NDK">
    <property type="method" value="X-ray"/>
    <property type="resolution" value="3.64 A"/>
    <property type="chains" value="RP/YP=1-150"/>
</dbReference>
<dbReference type="PDB" id="6NSH">
    <property type="method" value="X-ray"/>
    <property type="resolution" value="3.40 A"/>
    <property type="chains" value="RP/YP=1-150"/>
</dbReference>
<dbReference type="PDB" id="6NTA">
    <property type="method" value="X-ray"/>
    <property type="resolution" value="3.10 A"/>
    <property type="chains" value="RP/YP=1-150"/>
</dbReference>
<dbReference type="PDB" id="6NUO">
    <property type="method" value="X-ray"/>
    <property type="resolution" value="3.20 A"/>
    <property type="chains" value="RP/YP=1-150"/>
</dbReference>
<dbReference type="PDB" id="6NWY">
    <property type="method" value="X-ray"/>
    <property type="resolution" value="3.50 A"/>
    <property type="chains" value="RP/YP=1-150"/>
</dbReference>
<dbReference type="PDB" id="6O3M">
    <property type="method" value="X-ray"/>
    <property type="resolution" value="3.97 A"/>
    <property type="chains" value="RP/YP=1-150"/>
</dbReference>
<dbReference type="PDB" id="6O97">
    <property type="method" value="X-ray"/>
    <property type="resolution" value="2.75 A"/>
    <property type="chains" value="1P/2P=1-150"/>
</dbReference>
<dbReference type="PDB" id="6OF1">
    <property type="method" value="X-ray"/>
    <property type="resolution" value="2.80 A"/>
    <property type="chains" value="1P/2P=1-150"/>
</dbReference>
<dbReference type="PDB" id="6OF6">
    <property type="method" value="X-ray"/>
    <property type="resolution" value="3.20 A"/>
    <property type="chains" value="RP/YP=1-150"/>
</dbReference>
<dbReference type="PDB" id="6OJ2">
    <property type="method" value="X-ray"/>
    <property type="resolution" value="3.20 A"/>
    <property type="chains" value="RP/YP=1-150"/>
</dbReference>
<dbReference type="PDB" id="6OPE">
    <property type="method" value="X-ray"/>
    <property type="resolution" value="3.10 A"/>
    <property type="chains" value="RP/YP=1-150"/>
</dbReference>
<dbReference type="PDB" id="6ORD">
    <property type="method" value="X-ray"/>
    <property type="resolution" value="3.10 A"/>
    <property type="chains" value="RP/YP=1-150"/>
</dbReference>
<dbReference type="PDB" id="6OSI">
    <property type="method" value="X-ray"/>
    <property type="resolution" value="4.14 A"/>
    <property type="chains" value="RP/YP=1-150"/>
</dbReference>
<dbReference type="PDB" id="6OTR">
    <property type="method" value="X-ray"/>
    <property type="resolution" value="3.12 A"/>
    <property type="chains" value="RP/YP=1-150"/>
</dbReference>
<dbReference type="PDB" id="6OXA">
    <property type="method" value="X-ray"/>
    <property type="resolution" value="3.25 A"/>
    <property type="chains" value="RP/YP=1-150"/>
</dbReference>
<dbReference type="PDB" id="6OXI">
    <property type="method" value="X-ray"/>
    <property type="resolution" value="3.50 A"/>
    <property type="chains" value="RP/YP=1-150"/>
</dbReference>
<dbReference type="PDB" id="6Q95">
    <property type="method" value="EM"/>
    <property type="resolution" value="3.70 A"/>
    <property type="chains" value="L=5-150"/>
</dbReference>
<dbReference type="PDB" id="6QNQ">
    <property type="method" value="X-ray"/>
    <property type="resolution" value="3.50 A"/>
    <property type="chains" value="35/78=1-150"/>
</dbReference>
<dbReference type="PDB" id="6QNR">
    <property type="method" value="X-ray"/>
    <property type="resolution" value="3.10 A"/>
    <property type="chains" value="35/78=1-150"/>
</dbReference>
<dbReference type="PDB" id="6UCQ">
    <property type="method" value="X-ray"/>
    <property type="resolution" value="3.50 A"/>
    <property type="chains" value="1P/2P=1-150"/>
</dbReference>
<dbReference type="PDB" id="6UO1">
    <property type="method" value="X-ray"/>
    <property type="resolution" value="2.95 A"/>
    <property type="chains" value="1P/2P=1-150"/>
</dbReference>
<dbReference type="PDB" id="6XHV">
    <property type="method" value="X-ray"/>
    <property type="resolution" value="2.40 A"/>
    <property type="chains" value="1P/2P=1-150"/>
</dbReference>
<dbReference type="PDB" id="6XHW">
    <property type="method" value="X-ray"/>
    <property type="resolution" value="2.50 A"/>
    <property type="chains" value="1P/2P=1-150"/>
</dbReference>
<dbReference type="PDB" id="6XHX">
    <property type="method" value="X-ray"/>
    <property type="resolution" value="2.55 A"/>
    <property type="chains" value="1P/2P=1-150"/>
</dbReference>
<dbReference type="PDB" id="6XHY">
    <property type="method" value="X-ray"/>
    <property type="resolution" value="2.60 A"/>
    <property type="chains" value="1P/2P=1-150"/>
</dbReference>
<dbReference type="PDB" id="6XQD">
    <property type="method" value="X-ray"/>
    <property type="resolution" value="2.80 A"/>
    <property type="chains" value="1P/2P=1-150"/>
</dbReference>
<dbReference type="PDB" id="6XQE">
    <property type="method" value="X-ray"/>
    <property type="resolution" value="3.00 A"/>
    <property type="chains" value="1P/2P=1-150"/>
</dbReference>
<dbReference type="PDB" id="7AZO">
    <property type="method" value="X-ray"/>
    <property type="resolution" value="3.30 A"/>
    <property type="chains" value="L15A/L15B=1-150"/>
</dbReference>
<dbReference type="PDB" id="7AZS">
    <property type="method" value="X-ray"/>
    <property type="resolution" value="3.10 A"/>
    <property type="chains" value="L15A/L15B=1-150"/>
</dbReference>
<dbReference type="PDB" id="7JQL">
    <property type="method" value="X-ray"/>
    <property type="resolution" value="3.00 A"/>
    <property type="chains" value="1P/2P=1-150"/>
</dbReference>
<dbReference type="PDB" id="7JQM">
    <property type="method" value="X-ray"/>
    <property type="resolution" value="3.05 A"/>
    <property type="chains" value="1P/2P=1-150"/>
</dbReference>
<dbReference type="PDB" id="7LH5">
    <property type="method" value="X-ray"/>
    <property type="resolution" value="3.27 A"/>
    <property type="chains" value="BP/DP=1-150"/>
</dbReference>
<dbReference type="PDB" id="7MD7">
    <property type="method" value="X-ray"/>
    <property type="resolution" value="2.80 A"/>
    <property type="chains" value="1P/2P=1-150"/>
</dbReference>
<dbReference type="PDB" id="7RQ8">
    <property type="method" value="X-ray"/>
    <property type="resolution" value="2.50 A"/>
    <property type="chains" value="1P/2P=1-150"/>
</dbReference>
<dbReference type="PDB" id="7RQ9">
    <property type="method" value="X-ray"/>
    <property type="resolution" value="2.60 A"/>
    <property type="chains" value="1P/2P=1-150"/>
</dbReference>
<dbReference type="PDB" id="7RQA">
    <property type="method" value="X-ray"/>
    <property type="resolution" value="2.40 A"/>
    <property type="chains" value="1P/2P=1-150"/>
</dbReference>
<dbReference type="PDB" id="7RQB">
    <property type="method" value="X-ray"/>
    <property type="resolution" value="2.45 A"/>
    <property type="chains" value="1P/2P=1-150"/>
</dbReference>
<dbReference type="PDB" id="7RQC">
    <property type="method" value="X-ray"/>
    <property type="resolution" value="2.50 A"/>
    <property type="chains" value="1P/2P=1-150"/>
</dbReference>
<dbReference type="PDB" id="7RQD">
    <property type="method" value="X-ray"/>
    <property type="resolution" value="2.50 A"/>
    <property type="chains" value="1P/2P=1-150"/>
</dbReference>
<dbReference type="PDB" id="7RQE">
    <property type="method" value="X-ray"/>
    <property type="resolution" value="2.40 A"/>
    <property type="chains" value="1P/2P=1-150"/>
</dbReference>
<dbReference type="PDB" id="7U2H">
    <property type="method" value="X-ray"/>
    <property type="resolution" value="2.55 A"/>
    <property type="chains" value="1P/2P=1-150"/>
</dbReference>
<dbReference type="PDB" id="7U2I">
    <property type="method" value="X-ray"/>
    <property type="resolution" value="2.55 A"/>
    <property type="chains" value="1P/2P=1-150"/>
</dbReference>
<dbReference type="PDB" id="7U2J">
    <property type="method" value="X-ray"/>
    <property type="resolution" value="2.55 A"/>
    <property type="chains" value="1P/2P=1-150"/>
</dbReference>
<dbReference type="PDB" id="8CVJ">
    <property type="method" value="X-ray"/>
    <property type="resolution" value="2.40 A"/>
    <property type="chains" value="1P/2P=1-150"/>
</dbReference>
<dbReference type="PDB" id="8CVK">
    <property type="method" value="X-ray"/>
    <property type="resolution" value="2.50 A"/>
    <property type="chains" value="1P/2P=1-150"/>
</dbReference>
<dbReference type="PDB" id="8CVL">
    <property type="method" value="X-ray"/>
    <property type="resolution" value="2.30 A"/>
    <property type="chains" value="1P/2P=1-150"/>
</dbReference>
<dbReference type="PDB" id="8EKB">
    <property type="method" value="X-ray"/>
    <property type="resolution" value="2.70 A"/>
    <property type="chains" value="1P/2P=1-150"/>
</dbReference>
<dbReference type="PDB" id="8EV6">
    <property type="method" value="X-ray"/>
    <property type="resolution" value="2.95 A"/>
    <property type="chains" value="1P/2P=1-150"/>
</dbReference>
<dbReference type="PDB" id="8EV7">
    <property type="method" value="X-ray"/>
    <property type="resolution" value="2.89 A"/>
    <property type="chains" value="1P/2P=1-150"/>
</dbReference>
<dbReference type="PDB" id="8FC1">
    <property type="method" value="X-ray"/>
    <property type="resolution" value="2.50 A"/>
    <property type="chains" value="1P/2P=1-150"/>
</dbReference>
<dbReference type="PDB" id="8FC2">
    <property type="method" value="X-ray"/>
    <property type="resolution" value="2.50 A"/>
    <property type="chains" value="1P/2P=1-150"/>
</dbReference>
<dbReference type="PDB" id="8FC3">
    <property type="method" value="X-ray"/>
    <property type="resolution" value="2.60 A"/>
    <property type="chains" value="1P/2P=1-150"/>
</dbReference>
<dbReference type="PDB" id="8FC4">
    <property type="method" value="X-ray"/>
    <property type="resolution" value="2.45 A"/>
    <property type="chains" value="1P/2P=1-150"/>
</dbReference>
<dbReference type="PDB" id="8FC5">
    <property type="method" value="X-ray"/>
    <property type="resolution" value="2.65 A"/>
    <property type="chains" value="1P/2P=1-150"/>
</dbReference>
<dbReference type="PDB" id="8FC6">
    <property type="method" value="X-ray"/>
    <property type="resolution" value="2.35 A"/>
    <property type="chains" value="1P/2P=1-150"/>
</dbReference>
<dbReference type="PDB" id="8FOM">
    <property type="method" value="X-ray"/>
    <property type="resolution" value="3.58 A"/>
    <property type="chains" value="RP/YP=1-150"/>
</dbReference>
<dbReference type="PDB" id="8FON">
    <property type="method" value="X-ray"/>
    <property type="resolution" value="3.64 A"/>
    <property type="chains" value="RP/YP=1-150"/>
</dbReference>
<dbReference type="PDB" id="8G29">
    <property type="method" value="X-ray"/>
    <property type="resolution" value="2.55 A"/>
    <property type="chains" value="1P/2P=1-150"/>
</dbReference>
<dbReference type="PDB" id="8G2A">
    <property type="method" value="X-ray"/>
    <property type="resolution" value="2.45 A"/>
    <property type="chains" value="1P/2P=1-150"/>
</dbReference>
<dbReference type="PDB" id="8G2B">
    <property type="method" value="X-ray"/>
    <property type="resolution" value="2.55 A"/>
    <property type="chains" value="1P/2P=1-150"/>
</dbReference>
<dbReference type="PDB" id="8G2C">
    <property type="method" value="X-ray"/>
    <property type="resolution" value="2.65 A"/>
    <property type="chains" value="1P/2P=1-150"/>
</dbReference>
<dbReference type="PDB" id="8G2D">
    <property type="method" value="X-ray"/>
    <property type="resolution" value="2.70 A"/>
    <property type="chains" value="1P/2P=1-150"/>
</dbReference>
<dbReference type="PDB" id="8T8B">
    <property type="method" value="X-ray"/>
    <property type="resolution" value="2.65 A"/>
    <property type="chains" value="1P/2P=1-150"/>
</dbReference>
<dbReference type="PDB" id="8T8C">
    <property type="method" value="X-ray"/>
    <property type="resolution" value="2.60 A"/>
    <property type="chains" value="1P/2P=1-150"/>
</dbReference>
<dbReference type="PDB" id="8UD6">
    <property type="method" value="X-ray"/>
    <property type="resolution" value="2.70 A"/>
    <property type="chains" value="1P/2P=1-150"/>
</dbReference>
<dbReference type="PDB" id="8UD7">
    <property type="method" value="X-ray"/>
    <property type="resolution" value="2.55 A"/>
    <property type="chains" value="1P/2P=1-150"/>
</dbReference>
<dbReference type="PDB" id="8UD8">
    <property type="method" value="X-ray"/>
    <property type="resolution" value="2.60 A"/>
    <property type="chains" value="1P/2P=1-150"/>
</dbReference>
<dbReference type="PDB" id="8UVR">
    <property type="method" value="X-ray"/>
    <property type="resolution" value="2.60 A"/>
    <property type="chains" value="1P/2P=1-150"/>
</dbReference>
<dbReference type="PDB" id="8UVS">
    <property type="method" value="X-ray"/>
    <property type="resolution" value="2.75 A"/>
    <property type="chains" value="1P/2P=1-150"/>
</dbReference>
<dbReference type="PDB" id="8VTU">
    <property type="method" value="X-ray"/>
    <property type="resolution" value="2.40 A"/>
    <property type="chains" value="1P/2P=1-150"/>
</dbReference>
<dbReference type="PDB" id="8VTV">
    <property type="method" value="X-ray"/>
    <property type="resolution" value="2.55 A"/>
    <property type="chains" value="1P/2P=1-150"/>
</dbReference>
<dbReference type="PDB" id="8VTW">
    <property type="method" value="X-ray"/>
    <property type="resolution" value="2.35 A"/>
    <property type="chains" value="1P/2P=1-150"/>
</dbReference>
<dbReference type="PDB" id="8VTX">
    <property type="method" value="X-ray"/>
    <property type="resolution" value="2.40 A"/>
    <property type="chains" value="1P/2P=1-150"/>
</dbReference>
<dbReference type="PDB" id="8VTY">
    <property type="method" value="X-ray"/>
    <property type="resolution" value="2.60 A"/>
    <property type="chains" value="1P/2P=1-150"/>
</dbReference>
<dbReference type="PDB" id="8WV1">
    <property type="method" value="X-ray"/>
    <property type="resolution" value="3.99 A"/>
    <property type="chains" value="K/k=1-150"/>
</dbReference>
<dbReference type="PDB" id="9B00">
    <property type="method" value="X-ray"/>
    <property type="resolution" value="2.80 A"/>
    <property type="chains" value="1P/2P=1-150"/>
</dbReference>
<dbReference type="PDB" id="9D0J">
    <property type="method" value="X-ray"/>
    <property type="resolution" value="2.50 A"/>
    <property type="chains" value="1P/2P=1-150"/>
</dbReference>
<dbReference type="PDB" id="9D7R">
    <property type="method" value="X-ray"/>
    <property type="resolution" value="2.70 A"/>
    <property type="chains" value="1P/2P=1-150"/>
</dbReference>
<dbReference type="PDB" id="9D7S">
    <property type="method" value="X-ray"/>
    <property type="resolution" value="2.85 A"/>
    <property type="chains" value="1P/2P=1-150"/>
</dbReference>
<dbReference type="PDB" id="9D7T">
    <property type="method" value="X-ray"/>
    <property type="resolution" value="2.70 A"/>
    <property type="chains" value="1P/2P=1-150"/>
</dbReference>
<dbReference type="PDB" id="9DFC">
    <property type="method" value="X-ray"/>
    <property type="resolution" value="2.50 A"/>
    <property type="chains" value="1P/2P=1-150"/>
</dbReference>
<dbReference type="PDB" id="9DFD">
    <property type="method" value="X-ray"/>
    <property type="resolution" value="2.60 A"/>
    <property type="chains" value="1P/2P=1-150"/>
</dbReference>
<dbReference type="PDB" id="9DFE">
    <property type="method" value="X-ray"/>
    <property type="resolution" value="2.60 A"/>
    <property type="chains" value="1P/2P=1-150"/>
</dbReference>
<dbReference type="PDBsum" id="1VVJ"/>
<dbReference type="PDBsum" id="1VY4"/>
<dbReference type="PDBsum" id="1VY5"/>
<dbReference type="PDBsum" id="1VY6"/>
<dbReference type="PDBsum" id="1VY7"/>
<dbReference type="PDBsum" id="4L47"/>
<dbReference type="PDBsum" id="4L71"/>
<dbReference type="PDBsum" id="4LEL"/>
<dbReference type="PDBsum" id="4LFZ"/>
<dbReference type="PDBsum" id="4LNT"/>
<dbReference type="PDBsum" id="4LSK"/>
<dbReference type="PDBsum" id="4LT8"/>
<dbReference type="PDBsum" id="4P6F"/>
<dbReference type="PDBsum" id="4P70"/>
<dbReference type="PDBsum" id="4TUA"/>
<dbReference type="PDBsum" id="4TUB"/>
<dbReference type="PDBsum" id="4TUC"/>
<dbReference type="PDBsum" id="4TUD"/>
<dbReference type="PDBsum" id="4TUE"/>
<dbReference type="PDBsum" id="4V42"/>
<dbReference type="PDBsum" id="4V4P"/>
<dbReference type="PDBsum" id="4V4X"/>
<dbReference type="PDBsum" id="4V4Y"/>
<dbReference type="PDBsum" id="4V4Z"/>
<dbReference type="PDBsum" id="4V51"/>
<dbReference type="PDBsum" id="4V5A"/>
<dbReference type="PDBsum" id="4V5C"/>
<dbReference type="PDBsum" id="4V5D"/>
<dbReference type="PDBsum" id="4V5E"/>
<dbReference type="PDBsum" id="4V5F"/>
<dbReference type="PDBsum" id="4V5G"/>
<dbReference type="PDBsum" id="4V5J"/>
<dbReference type="PDBsum" id="4V5K"/>
<dbReference type="PDBsum" id="4V5L"/>
<dbReference type="PDBsum" id="4V5M"/>
<dbReference type="PDBsum" id="4V5N"/>
<dbReference type="PDBsum" id="4V5P"/>
<dbReference type="PDBsum" id="4V5Q"/>
<dbReference type="PDBsum" id="4V5R"/>
<dbReference type="PDBsum" id="4V5S"/>
<dbReference type="PDBsum" id="4V68"/>
<dbReference type="PDBsum" id="4V6A"/>
<dbReference type="PDBsum" id="4V6F"/>
<dbReference type="PDBsum" id="4V6G"/>
<dbReference type="PDBsum" id="4V7J"/>
<dbReference type="PDBsum" id="4V7K"/>
<dbReference type="PDBsum" id="4V7L"/>
<dbReference type="PDBsum" id="4V7M"/>
<dbReference type="PDBsum" id="4V7W"/>
<dbReference type="PDBsum" id="4V7X"/>
<dbReference type="PDBsum" id="4V7Y"/>
<dbReference type="PDBsum" id="4V7Z"/>
<dbReference type="PDBsum" id="4V87"/>
<dbReference type="PDBsum" id="4V8A"/>
<dbReference type="PDBsum" id="4V8B"/>
<dbReference type="PDBsum" id="4V8C"/>
<dbReference type="PDBsum" id="4V8D"/>
<dbReference type="PDBsum" id="4V8E"/>
<dbReference type="PDBsum" id="4V8F"/>
<dbReference type="PDBsum" id="4V8G"/>
<dbReference type="PDBsum" id="4V8H"/>
<dbReference type="PDBsum" id="4V8I"/>
<dbReference type="PDBsum" id="4V8J"/>
<dbReference type="PDBsum" id="4V8N"/>
<dbReference type="PDBsum" id="4V8O"/>
<dbReference type="PDBsum" id="4V8Q"/>
<dbReference type="PDBsum" id="4V8U"/>
<dbReference type="PDBsum" id="4V8X"/>
<dbReference type="PDBsum" id="4V90"/>
<dbReference type="PDBsum" id="4V95"/>
<dbReference type="PDBsum" id="4V97"/>
<dbReference type="PDBsum" id="4V9A"/>
<dbReference type="PDBsum" id="4V9B"/>
<dbReference type="PDBsum" id="4V9H"/>
<dbReference type="PDBsum" id="4V9I"/>
<dbReference type="PDBsum" id="4V9R"/>
<dbReference type="PDBsum" id="4V9S"/>
<dbReference type="PDBsum" id="4W2E"/>
<dbReference type="PDBsum" id="4W2F"/>
<dbReference type="PDBsum" id="4W2G"/>
<dbReference type="PDBsum" id="4W2H"/>
<dbReference type="PDBsum" id="4W2I"/>
<dbReference type="PDBsum" id="4W4G"/>
<dbReference type="PDBsum" id="4WPO"/>
<dbReference type="PDBsum" id="4WQ1"/>
<dbReference type="PDBsum" id="4WQF"/>
<dbReference type="PDBsum" id="4WQR"/>
<dbReference type="PDBsum" id="4WQU"/>
<dbReference type="PDBsum" id="4WQY"/>
<dbReference type="PDBsum" id="4WR6"/>
<dbReference type="PDBsum" id="4WRA"/>
<dbReference type="PDBsum" id="4WRO"/>
<dbReference type="PDBsum" id="4WSD"/>
<dbReference type="PDBsum" id="4WSM"/>
<dbReference type="PDBsum" id="4WT1"/>
<dbReference type="PDBsum" id="4WT8"/>
<dbReference type="PDBsum" id="4WU1"/>
<dbReference type="PDBsum" id="4WZD"/>
<dbReference type="PDBsum" id="4WZO"/>
<dbReference type="PDBsum" id="4Y4O"/>
<dbReference type="PDBsum" id="4Y4P"/>
<dbReference type="PDBsum" id="4YPB"/>
<dbReference type="PDBsum" id="4YZV"/>
<dbReference type="PDBsum" id="4Z3S"/>
<dbReference type="PDBsum" id="4Z8C"/>
<dbReference type="PDBsum" id="4ZER"/>
<dbReference type="PDBsum" id="4ZSN"/>
<dbReference type="PDBsum" id="5A9Z"/>
<dbReference type="PDBsum" id="5AA0"/>
<dbReference type="PDBsum" id="5CZP"/>
<dbReference type="PDBsum" id="5D8B"/>
<dbReference type="PDBsum" id="5DFE"/>
<dbReference type="PDBsum" id="5DOX"/>
<dbReference type="PDBsum" id="5DOY"/>
<dbReference type="PDBsum" id="5E7K"/>
<dbReference type="PDBsum" id="5E81"/>
<dbReference type="PDBsum" id="5EL4"/>
<dbReference type="PDBsum" id="5EL5"/>
<dbReference type="PDBsum" id="5EL6"/>
<dbReference type="PDBsum" id="5EL7"/>
<dbReference type="PDBsum" id="5F8K"/>
<dbReference type="PDBsum" id="5FDU"/>
<dbReference type="PDBsum" id="5FDV"/>
<dbReference type="PDBsum" id="5HAU"/>
<dbReference type="PDBsum" id="5HCP"/>
<dbReference type="PDBsum" id="5HCQ"/>
<dbReference type="PDBsum" id="5HCR"/>
<dbReference type="PDBsum" id="5HD1"/>
<dbReference type="PDBsum" id="5IB7"/>
<dbReference type="PDBsum" id="5IB8"/>
<dbReference type="PDBsum" id="5IBB"/>
<dbReference type="PDBsum" id="5IMQ"/>
<dbReference type="PDBsum" id="5IMR"/>
<dbReference type="PDBsum" id="5J30"/>
<dbReference type="PDBsum" id="5J3C"/>
<dbReference type="PDBsum" id="5J4B"/>
<dbReference type="PDBsum" id="5J4C"/>
<dbReference type="PDBsum" id="5J8B"/>
<dbReference type="PDBsum" id="5NDJ"/>
<dbReference type="PDBsum" id="5NDK"/>
<dbReference type="PDBsum" id="5OT7"/>
<dbReference type="PDBsum" id="5UQ7"/>
<dbReference type="PDBsum" id="5UQ8"/>
<dbReference type="PDBsum" id="5VP2"/>
<dbReference type="PDBsum" id="5VPO"/>
<dbReference type="PDBsum" id="5VPP"/>
<dbReference type="PDBsum" id="5W4K"/>
<dbReference type="PDBsum" id="5WIS"/>
<dbReference type="PDBsum" id="5WIT"/>
<dbReference type="PDBsum" id="5ZLU"/>
<dbReference type="PDBsum" id="6BUW"/>
<dbReference type="PDBsum" id="6BZ6"/>
<dbReference type="PDBsum" id="6BZ7"/>
<dbReference type="PDBsum" id="6BZ8"/>
<dbReference type="PDBsum" id="6C5L"/>
<dbReference type="PDBsum" id="6CAE"/>
<dbReference type="PDBsum" id="6CFJ"/>
<dbReference type="PDBsum" id="6CFK"/>
<dbReference type="PDBsum" id="6CFL"/>
<dbReference type="PDBsum" id="6CZR"/>
<dbReference type="PDBsum" id="6FKR"/>
<dbReference type="PDBsum" id="6GSJ"/>
<dbReference type="PDBsum" id="6GSK"/>
<dbReference type="PDBsum" id="6GSL"/>
<dbReference type="PDBsum" id="6GZQ"/>
<dbReference type="PDBsum" id="6GZX"/>
<dbReference type="PDBsum" id="6GZZ"/>
<dbReference type="PDBsum" id="6N9E"/>
<dbReference type="PDBsum" id="6N9F"/>
<dbReference type="PDBsum" id="6ND5"/>
<dbReference type="PDBsum" id="6ND6"/>
<dbReference type="PDBsum" id="6NDK"/>
<dbReference type="PDBsum" id="6NSH"/>
<dbReference type="PDBsum" id="6NTA"/>
<dbReference type="PDBsum" id="6NUO"/>
<dbReference type="PDBsum" id="6NWY"/>
<dbReference type="PDBsum" id="6O3M"/>
<dbReference type="PDBsum" id="6O97"/>
<dbReference type="PDBsum" id="6OF1"/>
<dbReference type="PDBsum" id="6OF6"/>
<dbReference type="PDBsum" id="6OJ2"/>
<dbReference type="PDBsum" id="6OPE"/>
<dbReference type="PDBsum" id="6ORD"/>
<dbReference type="PDBsum" id="6OSI"/>
<dbReference type="PDBsum" id="6OTR"/>
<dbReference type="PDBsum" id="6OXA"/>
<dbReference type="PDBsum" id="6OXI"/>
<dbReference type="PDBsum" id="6Q95"/>
<dbReference type="PDBsum" id="6QNQ"/>
<dbReference type="PDBsum" id="6QNR"/>
<dbReference type="PDBsum" id="6UCQ"/>
<dbReference type="PDBsum" id="6UO1"/>
<dbReference type="PDBsum" id="6XHV"/>
<dbReference type="PDBsum" id="6XHW"/>
<dbReference type="PDBsum" id="6XHX"/>
<dbReference type="PDBsum" id="6XHY"/>
<dbReference type="PDBsum" id="6XQD"/>
<dbReference type="PDBsum" id="6XQE"/>
<dbReference type="PDBsum" id="7AZO"/>
<dbReference type="PDBsum" id="7AZS"/>
<dbReference type="PDBsum" id="7JQL"/>
<dbReference type="PDBsum" id="7JQM"/>
<dbReference type="PDBsum" id="7LH5"/>
<dbReference type="PDBsum" id="7MD7"/>
<dbReference type="PDBsum" id="7RQ8"/>
<dbReference type="PDBsum" id="7RQ9"/>
<dbReference type="PDBsum" id="7RQA"/>
<dbReference type="PDBsum" id="7RQB"/>
<dbReference type="PDBsum" id="7RQC"/>
<dbReference type="PDBsum" id="7RQD"/>
<dbReference type="PDBsum" id="7RQE"/>
<dbReference type="PDBsum" id="7U2H"/>
<dbReference type="PDBsum" id="7U2I"/>
<dbReference type="PDBsum" id="7U2J"/>
<dbReference type="PDBsum" id="8CVJ"/>
<dbReference type="PDBsum" id="8CVK"/>
<dbReference type="PDBsum" id="8CVL"/>
<dbReference type="PDBsum" id="8EKB"/>
<dbReference type="PDBsum" id="8EV6"/>
<dbReference type="PDBsum" id="8EV7"/>
<dbReference type="PDBsum" id="8FC1"/>
<dbReference type="PDBsum" id="8FC2"/>
<dbReference type="PDBsum" id="8FC3"/>
<dbReference type="PDBsum" id="8FC4"/>
<dbReference type="PDBsum" id="8FC5"/>
<dbReference type="PDBsum" id="8FC6"/>
<dbReference type="PDBsum" id="8FOM"/>
<dbReference type="PDBsum" id="8FON"/>
<dbReference type="PDBsum" id="8G29"/>
<dbReference type="PDBsum" id="8G2A"/>
<dbReference type="PDBsum" id="8G2B"/>
<dbReference type="PDBsum" id="8G2C"/>
<dbReference type="PDBsum" id="8G2D"/>
<dbReference type="PDBsum" id="8T8B"/>
<dbReference type="PDBsum" id="8T8C"/>
<dbReference type="PDBsum" id="8UD6"/>
<dbReference type="PDBsum" id="8UD7"/>
<dbReference type="PDBsum" id="8UD8"/>
<dbReference type="PDBsum" id="8UVR"/>
<dbReference type="PDBsum" id="8UVS"/>
<dbReference type="PDBsum" id="8VTU"/>
<dbReference type="PDBsum" id="8VTV"/>
<dbReference type="PDBsum" id="8VTW"/>
<dbReference type="PDBsum" id="8VTX"/>
<dbReference type="PDBsum" id="8VTY"/>
<dbReference type="PDBsum" id="8WV1"/>
<dbReference type="PDBsum" id="9B00"/>
<dbReference type="PDBsum" id="9D0J"/>
<dbReference type="PDBsum" id="9D7R"/>
<dbReference type="PDBsum" id="9D7S"/>
<dbReference type="PDBsum" id="9D7T"/>
<dbReference type="PDBsum" id="9DFC"/>
<dbReference type="PDBsum" id="9DFD"/>
<dbReference type="PDBsum" id="9DFE"/>
<dbReference type="EMDB" id="EMD-0101"/>
<dbReference type="EMDB" id="EMD-0104"/>
<dbReference type="EMDB" id="EMD-0105"/>
<dbReference type="EMDB" id="EMD-3852"/>
<dbReference type="EMDB" id="EMD-4475"/>
<dbReference type="EMDB" id="EMD-6934"/>
<dbReference type="EMDB" id="EMD-8596"/>
<dbReference type="EMDB" id="EMD-8597"/>
<dbReference type="SMR" id="Q5SHQ7"/>
<dbReference type="IntAct" id="Q5SHQ7">
    <property type="interactions" value="8"/>
</dbReference>
<dbReference type="EnsemblBacteria" id="BAD71496">
    <property type="protein sequence ID" value="BAD71496"/>
    <property type="gene ID" value="BAD71496"/>
</dbReference>
<dbReference type="GeneID" id="3168730"/>
<dbReference type="KEGG" id="ttj:TTHA1673"/>
<dbReference type="PATRIC" id="fig|300852.9.peg.1643"/>
<dbReference type="eggNOG" id="COG0200">
    <property type="taxonomic scope" value="Bacteria"/>
</dbReference>
<dbReference type="HOGENOM" id="CLU_055188_4_2_0"/>
<dbReference type="PhylomeDB" id="Q5SHQ7"/>
<dbReference type="Proteomes" id="UP000000532">
    <property type="component" value="Chromosome"/>
</dbReference>
<dbReference type="GO" id="GO:0022625">
    <property type="term" value="C:cytosolic large ribosomal subunit"/>
    <property type="evidence" value="ECO:0007669"/>
    <property type="project" value="TreeGrafter"/>
</dbReference>
<dbReference type="GO" id="GO:0019843">
    <property type="term" value="F:rRNA binding"/>
    <property type="evidence" value="ECO:0007669"/>
    <property type="project" value="UniProtKB-UniRule"/>
</dbReference>
<dbReference type="GO" id="GO:0003735">
    <property type="term" value="F:structural constituent of ribosome"/>
    <property type="evidence" value="ECO:0007669"/>
    <property type="project" value="InterPro"/>
</dbReference>
<dbReference type="GO" id="GO:0006412">
    <property type="term" value="P:translation"/>
    <property type="evidence" value="ECO:0007669"/>
    <property type="project" value="UniProtKB-UniRule"/>
</dbReference>
<dbReference type="Gene3D" id="3.100.10.10">
    <property type="match status" value="1"/>
</dbReference>
<dbReference type="HAMAP" id="MF_01341">
    <property type="entry name" value="Ribosomal_uL15"/>
    <property type="match status" value="1"/>
</dbReference>
<dbReference type="InterPro" id="IPR030878">
    <property type="entry name" value="Ribosomal_uL15"/>
</dbReference>
<dbReference type="InterPro" id="IPR021131">
    <property type="entry name" value="Ribosomal_uL15/eL18"/>
</dbReference>
<dbReference type="InterPro" id="IPR036227">
    <property type="entry name" value="Ribosomal_uL15/eL18_sf"/>
</dbReference>
<dbReference type="InterPro" id="IPR005749">
    <property type="entry name" value="Ribosomal_uL15_bac-type"/>
</dbReference>
<dbReference type="InterPro" id="IPR001196">
    <property type="entry name" value="Ribosomal_uL15_CS"/>
</dbReference>
<dbReference type="NCBIfam" id="TIGR01071">
    <property type="entry name" value="rplO_bact"/>
    <property type="match status" value="1"/>
</dbReference>
<dbReference type="PANTHER" id="PTHR12934">
    <property type="entry name" value="50S RIBOSOMAL PROTEIN L15"/>
    <property type="match status" value="1"/>
</dbReference>
<dbReference type="PANTHER" id="PTHR12934:SF11">
    <property type="entry name" value="LARGE RIBOSOMAL SUBUNIT PROTEIN UL15M"/>
    <property type="match status" value="1"/>
</dbReference>
<dbReference type="Pfam" id="PF00828">
    <property type="entry name" value="Ribosomal_L27A"/>
    <property type="match status" value="1"/>
</dbReference>
<dbReference type="SUPFAM" id="SSF52080">
    <property type="entry name" value="Ribosomal proteins L15p and L18e"/>
    <property type="match status" value="1"/>
</dbReference>
<dbReference type="PROSITE" id="PS00475">
    <property type="entry name" value="RIBOSOMAL_L15"/>
    <property type="match status" value="1"/>
</dbReference>
<evidence type="ECO:0000250" key="1"/>
<evidence type="ECO:0000256" key="2">
    <source>
        <dbReference type="SAM" id="MobiDB-lite"/>
    </source>
</evidence>
<evidence type="ECO:0000269" key="3">
    <source>
    </source>
</evidence>
<evidence type="ECO:0000305" key="4"/>
<evidence type="ECO:0007829" key="5">
    <source>
        <dbReference type="PDB" id="4WT8"/>
    </source>
</evidence>
<feature type="chain" id="PRO_0000104846" description="Large ribosomal subunit protein uL15">
    <location>
        <begin position="1"/>
        <end position="150"/>
    </location>
</feature>
<feature type="region of interest" description="Disordered" evidence="2">
    <location>
        <begin position="1"/>
        <end position="60"/>
    </location>
</feature>
<feature type="compositionally biased region" description="Basic residues" evidence="2">
    <location>
        <begin position="30"/>
        <end position="39"/>
    </location>
</feature>
<feature type="compositionally biased region" description="Basic and acidic residues" evidence="2">
    <location>
        <begin position="44"/>
        <end position="53"/>
    </location>
</feature>
<feature type="strand" evidence="5">
    <location>
        <begin position="25"/>
        <end position="29"/>
    </location>
</feature>
<feature type="strand" evidence="5">
    <location>
        <begin position="37"/>
        <end position="40"/>
    </location>
</feature>
<feature type="strand" evidence="5">
    <location>
        <begin position="53"/>
        <end position="55"/>
    </location>
</feature>
<feature type="strand" evidence="5">
    <location>
        <begin position="81"/>
        <end position="84"/>
    </location>
</feature>
<feature type="helix" evidence="5">
    <location>
        <begin position="85"/>
        <end position="88"/>
    </location>
</feature>
<feature type="strand" evidence="5">
    <location>
        <begin position="93"/>
        <end position="95"/>
    </location>
</feature>
<feature type="turn" evidence="5">
    <location>
        <begin position="97"/>
        <end position="104"/>
    </location>
</feature>
<feature type="strand" evidence="5">
    <location>
        <begin position="111"/>
        <end position="115"/>
    </location>
</feature>
<feature type="strand" evidence="5">
    <location>
        <begin position="122"/>
        <end position="125"/>
    </location>
</feature>
<feature type="strand" evidence="5">
    <location>
        <begin position="128"/>
        <end position="130"/>
    </location>
</feature>
<feature type="helix" evidence="5">
    <location>
        <begin position="132"/>
        <end position="137"/>
    </location>
</feature>
<feature type="strand" evidence="5">
    <location>
        <begin position="140"/>
        <end position="142"/>
    </location>
</feature>
<sequence length="150" mass="16281">MKLSDLRPNPGANKRRKRVGRGPGSGHGKTATRGHKGQKSRSGGLKDPRRFEGGRSTTLMRLPKRGMQGQVPGEIKRPRYQGVNLKDLARFEGEVTPELLVRAGLLKKGYRLKILGEGEAKPLKVVAHAFSKSALEKLKAAGGEPVLLEA</sequence>
<name>RL15_THET8</name>